<sequence length="253" mass="27614">MQKLIMGNWKMNGNSTSIKELCSGISQAQYDTSRVAIAVFPSSVYVKEVISQLPEKVGVGLQNITFYDDGAYTGEISARMLEDIGCDYLLIGHSERRSLFAESDEDVFKKLNKIIDTTITPVVCIGESLDDRQSGKLKQVLATQLSLILENLSVEQLAKVVIAYEPVWAIGTGVVASLDQIQETHQFIRSLLAKVDERLAKNIKIVYGGSLKAENAKDILSLPDVDGGLIGGASLKAAEFNEIINQANKICTE</sequence>
<gene>
    <name evidence="1" type="primary">tpiA</name>
    <name type="ordered locus">FTN_1631</name>
</gene>
<reference key="1">
    <citation type="journal article" date="2007" name="Genome Biol.">
        <title>Comparison of Francisella tularensis genomes reveals evolutionary events associated with the emergence of human pathogenic strains.</title>
        <authorList>
            <person name="Rohmer L."/>
            <person name="Fong C."/>
            <person name="Abmayr S."/>
            <person name="Wasnick M."/>
            <person name="Larson Freeman T.J."/>
            <person name="Radey M."/>
            <person name="Guina T."/>
            <person name="Svensson K."/>
            <person name="Hayden H.S."/>
            <person name="Jacobs M."/>
            <person name="Gallagher L.A."/>
            <person name="Manoil C."/>
            <person name="Ernst R.K."/>
            <person name="Drees B."/>
            <person name="Buckley D."/>
            <person name="Haugen E."/>
            <person name="Bovee D."/>
            <person name="Zhou Y."/>
            <person name="Chang J."/>
            <person name="Levy R."/>
            <person name="Lim R."/>
            <person name="Gillett W."/>
            <person name="Guenthener D."/>
            <person name="Kang A."/>
            <person name="Shaffer S.A."/>
            <person name="Taylor G."/>
            <person name="Chen J."/>
            <person name="Gallis B."/>
            <person name="D'Argenio D.A."/>
            <person name="Forsman M."/>
            <person name="Olson M.V."/>
            <person name="Goodlett D.R."/>
            <person name="Kaul R."/>
            <person name="Miller S.I."/>
            <person name="Brittnacher M.J."/>
        </authorList>
    </citation>
    <scope>NUCLEOTIDE SEQUENCE [LARGE SCALE GENOMIC DNA]</scope>
    <source>
        <strain>U112</strain>
    </source>
</reference>
<dbReference type="EC" id="5.3.1.1" evidence="1"/>
<dbReference type="EMBL" id="CP000439">
    <property type="protein sequence ID" value="ABK90489.1"/>
    <property type="molecule type" value="Genomic_DNA"/>
</dbReference>
<dbReference type="RefSeq" id="WP_011733728.1">
    <property type="nucleotide sequence ID" value="NC_008601.1"/>
</dbReference>
<dbReference type="SMR" id="A0Q8C4"/>
<dbReference type="KEGG" id="ftn:FTN_1631"/>
<dbReference type="KEGG" id="ftx:AW25_358"/>
<dbReference type="BioCyc" id="FTUL401614:G1G75-1690-MONOMER"/>
<dbReference type="UniPathway" id="UPA00109">
    <property type="reaction ID" value="UER00189"/>
</dbReference>
<dbReference type="UniPathway" id="UPA00138"/>
<dbReference type="Proteomes" id="UP000000762">
    <property type="component" value="Chromosome"/>
</dbReference>
<dbReference type="GO" id="GO:0005829">
    <property type="term" value="C:cytosol"/>
    <property type="evidence" value="ECO:0007669"/>
    <property type="project" value="TreeGrafter"/>
</dbReference>
<dbReference type="GO" id="GO:0004807">
    <property type="term" value="F:triose-phosphate isomerase activity"/>
    <property type="evidence" value="ECO:0007669"/>
    <property type="project" value="UniProtKB-UniRule"/>
</dbReference>
<dbReference type="GO" id="GO:0006094">
    <property type="term" value="P:gluconeogenesis"/>
    <property type="evidence" value="ECO:0007669"/>
    <property type="project" value="UniProtKB-UniRule"/>
</dbReference>
<dbReference type="GO" id="GO:0046166">
    <property type="term" value="P:glyceraldehyde-3-phosphate biosynthetic process"/>
    <property type="evidence" value="ECO:0007669"/>
    <property type="project" value="TreeGrafter"/>
</dbReference>
<dbReference type="GO" id="GO:0019563">
    <property type="term" value="P:glycerol catabolic process"/>
    <property type="evidence" value="ECO:0007669"/>
    <property type="project" value="TreeGrafter"/>
</dbReference>
<dbReference type="GO" id="GO:0006096">
    <property type="term" value="P:glycolytic process"/>
    <property type="evidence" value="ECO:0007669"/>
    <property type="project" value="UniProtKB-UniRule"/>
</dbReference>
<dbReference type="CDD" id="cd00311">
    <property type="entry name" value="TIM"/>
    <property type="match status" value="1"/>
</dbReference>
<dbReference type="FunFam" id="3.20.20.70:FF:000016">
    <property type="entry name" value="Triosephosphate isomerase"/>
    <property type="match status" value="1"/>
</dbReference>
<dbReference type="Gene3D" id="3.20.20.70">
    <property type="entry name" value="Aldolase class I"/>
    <property type="match status" value="1"/>
</dbReference>
<dbReference type="HAMAP" id="MF_00147_B">
    <property type="entry name" value="TIM_B"/>
    <property type="match status" value="1"/>
</dbReference>
<dbReference type="InterPro" id="IPR013785">
    <property type="entry name" value="Aldolase_TIM"/>
</dbReference>
<dbReference type="InterPro" id="IPR035990">
    <property type="entry name" value="TIM_sf"/>
</dbReference>
<dbReference type="InterPro" id="IPR022896">
    <property type="entry name" value="TrioseP_Isoase_bac/euk"/>
</dbReference>
<dbReference type="InterPro" id="IPR000652">
    <property type="entry name" value="Triosephosphate_isomerase"/>
</dbReference>
<dbReference type="InterPro" id="IPR020861">
    <property type="entry name" value="Triosephosphate_isomerase_AS"/>
</dbReference>
<dbReference type="NCBIfam" id="TIGR00419">
    <property type="entry name" value="tim"/>
    <property type="match status" value="1"/>
</dbReference>
<dbReference type="PANTHER" id="PTHR21139">
    <property type="entry name" value="TRIOSEPHOSPHATE ISOMERASE"/>
    <property type="match status" value="1"/>
</dbReference>
<dbReference type="PANTHER" id="PTHR21139:SF42">
    <property type="entry name" value="TRIOSEPHOSPHATE ISOMERASE"/>
    <property type="match status" value="1"/>
</dbReference>
<dbReference type="Pfam" id="PF00121">
    <property type="entry name" value="TIM"/>
    <property type="match status" value="1"/>
</dbReference>
<dbReference type="SUPFAM" id="SSF51351">
    <property type="entry name" value="Triosephosphate isomerase (TIM)"/>
    <property type="match status" value="1"/>
</dbReference>
<dbReference type="PROSITE" id="PS00171">
    <property type="entry name" value="TIM_1"/>
    <property type="match status" value="1"/>
</dbReference>
<dbReference type="PROSITE" id="PS51440">
    <property type="entry name" value="TIM_2"/>
    <property type="match status" value="1"/>
</dbReference>
<evidence type="ECO:0000255" key="1">
    <source>
        <dbReference type="HAMAP-Rule" id="MF_00147"/>
    </source>
</evidence>
<name>TPIS_FRATN</name>
<accession>A0Q8C4</accession>
<protein>
    <recommendedName>
        <fullName evidence="1">Triosephosphate isomerase</fullName>
        <shortName evidence="1">TIM</shortName>
        <shortName evidence="1">TPI</shortName>
        <ecNumber evidence="1">5.3.1.1</ecNumber>
    </recommendedName>
    <alternativeName>
        <fullName evidence="1">Triose-phosphate isomerase</fullName>
    </alternativeName>
</protein>
<feature type="chain" id="PRO_0000307467" description="Triosephosphate isomerase">
    <location>
        <begin position="1"/>
        <end position="253"/>
    </location>
</feature>
<feature type="active site" description="Electrophile" evidence="1">
    <location>
        <position position="93"/>
    </location>
</feature>
<feature type="active site" description="Proton acceptor" evidence="1">
    <location>
        <position position="165"/>
    </location>
</feature>
<feature type="binding site" evidence="1">
    <location>
        <begin position="8"/>
        <end position="10"/>
    </location>
    <ligand>
        <name>substrate</name>
    </ligand>
</feature>
<feature type="binding site" evidence="1">
    <location>
        <position position="171"/>
    </location>
    <ligand>
        <name>substrate</name>
    </ligand>
</feature>
<feature type="binding site" evidence="1">
    <location>
        <position position="210"/>
    </location>
    <ligand>
        <name>substrate</name>
    </ligand>
</feature>
<feature type="binding site" evidence="1">
    <location>
        <begin position="231"/>
        <end position="232"/>
    </location>
    <ligand>
        <name>substrate</name>
    </ligand>
</feature>
<proteinExistence type="inferred from homology"/>
<organism>
    <name type="scientific">Francisella tularensis subsp. novicida (strain U112)</name>
    <dbReference type="NCBI Taxonomy" id="401614"/>
    <lineage>
        <taxon>Bacteria</taxon>
        <taxon>Pseudomonadati</taxon>
        <taxon>Pseudomonadota</taxon>
        <taxon>Gammaproteobacteria</taxon>
        <taxon>Thiotrichales</taxon>
        <taxon>Francisellaceae</taxon>
        <taxon>Francisella</taxon>
    </lineage>
</organism>
<keyword id="KW-0963">Cytoplasm</keyword>
<keyword id="KW-0312">Gluconeogenesis</keyword>
<keyword id="KW-0324">Glycolysis</keyword>
<keyword id="KW-0413">Isomerase</keyword>
<comment type="function">
    <text evidence="1">Involved in the gluconeogenesis. Catalyzes stereospecifically the conversion of dihydroxyacetone phosphate (DHAP) to D-glyceraldehyde-3-phosphate (G3P).</text>
</comment>
<comment type="catalytic activity">
    <reaction evidence="1">
        <text>D-glyceraldehyde 3-phosphate = dihydroxyacetone phosphate</text>
        <dbReference type="Rhea" id="RHEA:18585"/>
        <dbReference type="ChEBI" id="CHEBI:57642"/>
        <dbReference type="ChEBI" id="CHEBI:59776"/>
        <dbReference type="EC" id="5.3.1.1"/>
    </reaction>
</comment>
<comment type="pathway">
    <text evidence="1">Carbohydrate biosynthesis; gluconeogenesis.</text>
</comment>
<comment type="pathway">
    <text evidence="1">Carbohydrate degradation; glycolysis; D-glyceraldehyde 3-phosphate from glycerone phosphate: step 1/1.</text>
</comment>
<comment type="subunit">
    <text evidence="1">Homodimer.</text>
</comment>
<comment type="subcellular location">
    <subcellularLocation>
        <location evidence="1">Cytoplasm</location>
    </subcellularLocation>
</comment>
<comment type="similarity">
    <text evidence="1">Belongs to the triosephosphate isomerase family.</text>
</comment>